<dbReference type="EC" id="3.2.1.21"/>
<dbReference type="EMBL" id="AAHF01000012">
    <property type="protein sequence ID" value="EAL85682.1"/>
    <property type="molecule type" value="Genomic_DNA"/>
</dbReference>
<dbReference type="RefSeq" id="XP_747720.1">
    <property type="nucleotide sequence ID" value="XM_742627.1"/>
</dbReference>
<dbReference type="SMR" id="Q4WD56"/>
<dbReference type="STRING" id="330879.Q4WD56"/>
<dbReference type="GlyCosmos" id="Q4WD56">
    <property type="glycosylation" value="9 sites, No reported glycans"/>
</dbReference>
<dbReference type="EnsemblFungi" id="EAL85682">
    <property type="protein sequence ID" value="EAL85682"/>
    <property type="gene ID" value="AFUA_6G03570"/>
</dbReference>
<dbReference type="GeneID" id="3505005"/>
<dbReference type="KEGG" id="afm:AFUA_6G03570"/>
<dbReference type="VEuPathDB" id="FungiDB:Afu6g03570"/>
<dbReference type="eggNOG" id="ENOG502QR4D">
    <property type="taxonomic scope" value="Eukaryota"/>
</dbReference>
<dbReference type="HOGENOM" id="CLU_004542_2_0_1"/>
<dbReference type="InParanoid" id="Q4WD56"/>
<dbReference type="OMA" id="VVMESWI"/>
<dbReference type="OrthoDB" id="416222at2759"/>
<dbReference type="UniPathway" id="UPA00696"/>
<dbReference type="Proteomes" id="UP000002530">
    <property type="component" value="Chromosome 6"/>
</dbReference>
<dbReference type="GO" id="GO:0005886">
    <property type="term" value="C:plasma membrane"/>
    <property type="evidence" value="ECO:0007669"/>
    <property type="project" value="UniProtKB-SubCell"/>
</dbReference>
<dbReference type="GO" id="GO:0008422">
    <property type="term" value="F:beta-glucosidase activity"/>
    <property type="evidence" value="ECO:0000318"/>
    <property type="project" value="GO_Central"/>
</dbReference>
<dbReference type="GO" id="GO:0030245">
    <property type="term" value="P:cellulose catabolic process"/>
    <property type="evidence" value="ECO:0007669"/>
    <property type="project" value="UniProtKB-UniPathway"/>
</dbReference>
<dbReference type="GO" id="GO:0009251">
    <property type="term" value="P:glucan catabolic process"/>
    <property type="evidence" value="ECO:0000318"/>
    <property type="project" value="GO_Central"/>
</dbReference>
<dbReference type="FunFam" id="3.20.20.300:FF:000002">
    <property type="entry name" value="Probable beta-glucosidase"/>
    <property type="match status" value="1"/>
</dbReference>
<dbReference type="FunFam" id="3.40.50.1700:FF:000003">
    <property type="entry name" value="Probable beta-glucosidase"/>
    <property type="match status" value="1"/>
</dbReference>
<dbReference type="Gene3D" id="3.40.50.1700">
    <property type="entry name" value="Glycoside hydrolase family 3 C-terminal domain"/>
    <property type="match status" value="1"/>
</dbReference>
<dbReference type="Gene3D" id="3.20.20.300">
    <property type="entry name" value="Glycoside hydrolase, family 3, N-terminal domain"/>
    <property type="match status" value="1"/>
</dbReference>
<dbReference type="Gene3D" id="2.60.40.10">
    <property type="entry name" value="Immunoglobulins"/>
    <property type="match status" value="1"/>
</dbReference>
<dbReference type="InterPro" id="IPR050288">
    <property type="entry name" value="Cellulose_deg_GH3"/>
</dbReference>
<dbReference type="InterPro" id="IPR026891">
    <property type="entry name" value="Fn3-like"/>
</dbReference>
<dbReference type="InterPro" id="IPR002772">
    <property type="entry name" value="Glyco_hydro_3_C"/>
</dbReference>
<dbReference type="InterPro" id="IPR036881">
    <property type="entry name" value="Glyco_hydro_3_C_sf"/>
</dbReference>
<dbReference type="InterPro" id="IPR001764">
    <property type="entry name" value="Glyco_hydro_3_N"/>
</dbReference>
<dbReference type="InterPro" id="IPR036962">
    <property type="entry name" value="Glyco_hydro_3_N_sf"/>
</dbReference>
<dbReference type="InterPro" id="IPR017853">
    <property type="entry name" value="Glycoside_hydrolase_SF"/>
</dbReference>
<dbReference type="InterPro" id="IPR013783">
    <property type="entry name" value="Ig-like_fold"/>
</dbReference>
<dbReference type="PANTHER" id="PTHR42715">
    <property type="entry name" value="BETA-GLUCOSIDASE"/>
    <property type="match status" value="1"/>
</dbReference>
<dbReference type="PANTHER" id="PTHR42715:SF20">
    <property type="entry name" value="BETA-GLUCOSIDASE E-RELATED"/>
    <property type="match status" value="1"/>
</dbReference>
<dbReference type="Pfam" id="PF14310">
    <property type="entry name" value="Fn3-like"/>
    <property type="match status" value="1"/>
</dbReference>
<dbReference type="Pfam" id="PF00933">
    <property type="entry name" value="Glyco_hydro_3"/>
    <property type="match status" value="1"/>
</dbReference>
<dbReference type="Pfam" id="PF01915">
    <property type="entry name" value="Glyco_hydro_3_C"/>
    <property type="match status" value="1"/>
</dbReference>
<dbReference type="PRINTS" id="PR00133">
    <property type="entry name" value="GLHYDRLASE3"/>
</dbReference>
<dbReference type="SMART" id="SM01217">
    <property type="entry name" value="Fn3_like"/>
    <property type="match status" value="1"/>
</dbReference>
<dbReference type="SUPFAM" id="SSF51445">
    <property type="entry name" value="(Trans)glycosidases"/>
    <property type="match status" value="1"/>
</dbReference>
<dbReference type="SUPFAM" id="SSF52279">
    <property type="entry name" value="Beta-D-glucan exohydrolase, C-terminal domain"/>
    <property type="match status" value="1"/>
</dbReference>
<evidence type="ECO:0000250" key="1"/>
<evidence type="ECO:0000255" key="2"/>
<evidence type="ECO:0000256" key="3">
    <source>
        <dbReference type="SAM" id="MobiDB-lite"/>
    </source>
</evidence>
<evidence type="ECO:0000305" key="4"/>
<proteinExistence type="inferred from homology"/>
<protein>
    <recommendedName>
        <fullName>Probable beta-glucosidase E</fullName>
        <ecNumber>3.2.1.21</ecNumber>
    </recommendedName>
    <alternativeName>
        <fullName>Beta-D-glucoside glucohydrolase E</fullName>
    </alternativeName>
    <alternativeName>
        <fullName>Cellobiase E</fullName>
    </alternativeName>
    <alternativeName>
        <fullName>Gentiobiase E</fullName>
    </alternativeName>
</protein>
<reference key="1">
    <citation type="journal article" date="2005" name="Nature">
        <title>Genomic sequence of the pathogenic and allergenic filamentous fungus Aspergillus fumigatus.</title>
        <authorList>
            <person name="Nierman W.C."/>
            <person name="Pain A."/>
            <person name="Anderson M.J."/>
            <person name="Wortman J.R."/>
            <person name="Kim H.S."/>
            <person name="Arroyo J."/>
            <person name="Berriman M."/>
            <person name="Abe K."/>
            <person name="Archer D.B."/>
            <person name="Bermejo C."/>
            <person name="Bennett J.W."/>
            <person name="Bowyer P."/>
            <person name="Chen D."/>
            <person name="Collins M."/>
            <person name="Coulsen R."/>
            <person name="Davies R."/>
            <person name="Dyer P.S."/>
            <person name="Farman M.L."/>
            <person name="Fedorova N."/>
            <person name="Fedorova N.D."/>
            <person name="Feldblyum T.V."/>
            <person name="Fischer R."/>
            <person name="Fosker N."/>
            <person name="Fraser A."/>
            <person name="Garcia J.L."/>
            <person name="Garcia M.J."/>
            <person name="Goble A."/>
            <person name="Goldman G.H."/>
            <person name="Gomi K."/>
            <person name="Griffith-Jones S."/>
            <person name="Gwilliam R."/>
            <person name="Haas B.J."/>
            <person name="Haas H."/>
            <person name="Harris D.E."/>
            <person name="Horiuchi H."/>
            <person name="Huang J."/>
            <person name="Humphray S."/>
            <person name="Jimenez J."/>
            <person name="Keller N."/>
            <person name="Khouri H."/>
            <person name="Kitamoto K."/>
            <person name="Kobayashi T."/>
            <person name="Konzack S."/>
            <person name="Kulkarni R."/>
            <person name="Kumagai T."/>
            <person name="Lafton A."/>
            <person name="Latge J.-P."/>
            <person name="Li W."/>
            <person name="Lord A."/>
            <person name="Lu C."/>
            <person name="Majoros W.H."/>
            <person name="May G.S."/>
            <person name="Miller B.L."/>
            <person name="Mohamoud Y."/>
            <person name="Molina M."/>
            <person name="Monod M."/>
            <person name="Mouyna I."/>
            <person name="Mulligan S."/>
            <person name="Murphy L.D."/>
            <person name="O'Neil S."/>
            <person name="Paulsen I."/>
            <person name="Penalva M.A."/>
            <person name="Pertea M."/>
            <person name="Price C."/>
            <person name="Pritchard B.L."/>
            <person name="Quail M.A."/>
            <person name="Rabbinowitsch E."/>
            <person name="Rawlins N."/>
            <person name="Rajandream M.A."/>
            <person name="Reichard U."/>
            <person name="Renauld H."/>
            <person name="Robson G.D."/>
            <person name="Rodriguez de Cordoba S."/>
            <person name="Rodriguez-Pena J.M."/>
            <person name="Ronning C.M."/>
            <person name="Rutter S."/>
            <person name="Salzberg S.L."/>
            <person name="Sanchez M."/>
            <person name="Sanchez-Ferrero J.C."/>
            <person name="Saunders D."/>
            <person name="Seeger K."/>
            <person name="Squares R."/>
            <person name="Squares S."/>
            <person name="Takeuchi M."/>
            <person name="Tekaia F."/>
            <person name="Turner G."/>
            <person name="Vazquez de Aldana C.R."/>
            <person name="Weidman J."/>
            <person name="White O."/>
            <person name="Woodward J.R."/>
            <person name="Yu J.-H."/>
            <person name="Fraser C.M."/>
            <person name="Galagan J.E."/>
            <person name="Asai K."/>
            <person name="Machida M."/>
            <person name="Hall N."/>
            <person name="Barrell B.G."/>
            <person name="Denning D.W."/>
        </authorList>
    </citation>
    <scope>NUCLEOTIDE SEQUENCE [LARGE SCALE GENOMIC DNA]</scope>
    <source>
        <strain>ATCC MYA-4609 / CBS 101355 / FGSC A1100 / Af293</strain>
    </source>
</reference>
<accession>Q4WD56</accession>
<keyword id="KW-0119">Carbohydrate metabolism</keyword>
<keyword id="KW-1003">Cell membrane</keyword>
<keyword id="KW-0136">Cellulose degradation</keyword>
<keyword id="KW-0325">Glycoprotein</keyword>
<keyword id="KW-0326">Glycosidase</keyword>
<keyword id="KW-0378">Hydrolase</keyword>
<keyword id="KW-0472">Membrane</keyword>
<keyword id="KW-0624">Polysaccharide degradation</keyword>
<keyword id="KW-1185">Reference proteome</keyword>
<keyword id="KW-0735">Signal-anchor</keyword>
<keyword id="KW-0812">Transmembrane</keyword>
<keyword id="KW-1133">Transmembrane helix</keyword>
<comment type="function">
    <text evidence="1">Beta-glucosidases are one of a number of cellulolytic enzymes involved in the degradation of cellulosic biomass. Catalyzes the last step releasing glucose from the inhibitory cellobiose (By similarity).</text>
</comment>
<comment type="catalytic activity">
    <reaction>
        <text>Hydrolysis of terminal, non-reducing beta-D-glucosyl residues with release of beta-D-glucose.</text>
        <dbReference type="EC" id="3.2.1.21"/>
    </reaction>
</comment>
<comment type="pathway">
    <text>Glycan metabolism; cellulose degradation.</text>
</comment>
<comment type="subcellular location">
    <subcellularLocation>
        <location evidence="1">Cell membrane</location>
        <topology evidence="1">Single-pass type II membrane protein</topology>
    </subcellularLocation>
</comment>
<comment type="similarity">
    <text evidence="4">Belongs to the glycosyl hydrolase 3 family.</text>
</comment>
<name>BGLE_ASPFU</name>
<sequence length="1033" mass="113423">MAPPDSTHGGSFRDHLKTNDRSSTSKGKQRYSPLQEAIPEEISSFRSPSEYADTDSDSDLERSGSYKLRPVDRYGSHHSSAFIPVIREENGVETYLDSITEAEQELLSASKQYDLVDDDDSSDFDSDEEATLRYRLKDRLKRRRARLQAWQPVKYARIWWRTLLAVVVTLVVVVWGFLSFAVSHREEPTVWPMVPSDSWFPSPKGGTLKHWEESYKKAQSLVRNMTLVEKVNITTGIGWQMGLCVGNTGPADIVKFPSLCLQDGPQGLRFADHVSAFPAGITTGSTWNRELMRERGVAMGREARLKGVNVLLGPSMGPLGMMPAGGRNWEGFGSDPVLQAVAAAETIRGIQSNGVMATAKHFVMNEQEHFRQPFEWGIPTALSSNVGDRALHEVFAWPFAESIRADVASVMCSYQMVNNSHACENSKLLNGILKDELGFQGFVQSDWLAQRSGINSALGGLDMSMPGDGLHWVDGKSLWGSELTRAVLNTSVPVERLNDMVTRIVAAWYHLGQDTWERPPPEGNGGPNFSSWTNDEVGWLHTGSNDGSYARVNHYVDAQGTGPEAHSIIARKVAAEGTVLLKNVDRTLPLSRNASSPSGGILRVGIYGDDAGPALGPNACPDRGCNQGTLATGWGSGTVEFPYLVSPIEALESAWSTEIESTAYLRNAVMPADAVDKDLCLVFVNADSGEGYISAGGIHGDRNDLFLQKGGDTLVRTVSSNCGGGQGKTVVVIHAVGPVVMESWIDLPGVHAVLLANLPGQESGNALVDVLFGEVDASGRLPYTIGKSLEDYGPGAQVLYEPNAPVPQVDFLDALYIDYRHFDRHNITPRFEFGFGLSYTTFELLDLSISPLQQKSRSVPPRPADAVAPPVYDISLPDPASALFPAGFQPVFKYIYPYLSNLDGTAPHNYSFYPKGYNETQRPSPAGGGAGGHPALYEEMVSVKLQVSNTGDRKGQEVVQVYVSFPPDFPERVLRNFTKIELEPSERREVQMTLSRKDLSYWSTREQNWVMPEGKFQIWVGRSSRDLPLMGEY</sequence>
<gene>
    <name type="primary">bglE</name>
    <name type="ORF">AFUA_6G03570</name>
</gene>
<organism>
    <name type="scientific">Aspergillus fumigatus (strain ATCC MYA-4609 / CBS 101355 / FGSC A1100 / Af293)</name>
    <name type="common">Neosartorya fumigata</name>
    <dbReference type="NCBI Taxonomy" id="330879"/>
    <lineage>
        <taxon>Eukaryota</taxon>
        <taxon>Fungi</taxon>
        <taxon>Dikarya</taxon>
        <taxon>Ascomycota</taxon>
        <taxon>Pezizomycotina</taxon>
        <taxon>Eurotiomycetes</taxon>
        <taxon>Eurotiomycetidae</taxon>
        <taxon>Eurotiales</taxon>
        <taxon>Aspergillaceae</taxon>
        <taxon>Aspergillus</taxon>
        <taxon>Aspergillus subgen. Fumigati</taxon>
    </lineage>
</organism>
<feature type="chain" id="PRO_0000394872" description="Probable beta-glucosidase E">
    <location>
        <begin position="1"/>
        <end position="1033"/>
    </location>
</feature>
<feature type="topological domain" description="Cytoplasmic" evidence="2">
    <location>
        <begin position="1"/>
        <end position="161"/>
    </location>
</feature>
<feature type="transmembrane region" description="Helical; Signal-anchor for type II membrane protein" evidence="2">
    <location>
        <begin position="162"/>
        <end position="182"/>
    </location>
</feature>
<feature type="topological domain" description="Extracellular" evidence="2">
    <location>
        <begin position="183"/>
        <end position="1033"/>
    </location>
</feature>
<feature type="region of interest" description="Disordered" evidence="3">
    <location>
        <begin position="1"/>
        <end position="71"/>
    </location>
</feature>
<feature type="compositionally biased region" description="Basic and acidic residues" evidence="3">
    <location>
        <begin position="11"/>
        <end position="20"/>
    </location>
</feature>
<feature type="compositionally biased region" description="Basic and acidic residues" evidence="3">
    <location>
        <begin position="59"/>
        <end position="71"/>
    </location>
</feature>
<feature type="active site" evidence="1">
    <location>
        <position position="446"/>
    </location>
</feature>
<feature type="glycosylation site" description="N-linked (GlcNAc...) asparagine" evidence="2">
    <location>
        <position position="224"/>
    </location>
</feature>
<feature type="glycosylation site" description="N-linked (GlcNAc...) asparagine" evidence="2">
    <location>
        <position position="232"/>
    </location>
</feature>
<feature type="glycosylation site" description="N-linked (GlcNAc...) asparagine" evidence="2">
    <location>
        <position position="418"/>
    </location>
</feature>
<feature type="glycosylation site" description="N-linked (GlcNAc...) asparagine" evidence="2">
    <location>
        <position position="489"/>
    </location>
</feature>
<feature type="glycosylation site" description="N-linked (GlcNAc...) asparagine" evidence="2">
    <location>
        <position position="528"/>
    </location>
</feature>
<feature type="glycosylation site" description="N-linked (GlcNAc...) asparagine" evidence="2">
    <location>
        <position position="593"/>
    </location>
</feature>
<feature type="glycosylation site" description="N-linked (GlcNAc...) asparagine" evidence="2">
    <location>
        <position position="909"/>
    </location>
</feature>
<feature type="glycosylation site" description="N-linked (GlcNAc...) asparagine" evidence="2">
    <location>
        <position position="918"/>
    </location>
</feature>
<feature type="glycosylation site" description="N-linked (GlcNAc...) asparagine" evidence="2">
    <location>
        <position position="976"/>
    </location>
</feature>